<feature type="chain" id="PRO_0000366668" description="Ribosomal RNA large subunit methyltransferase H 2">
    <location>
        <begin position="1"/>
        <end position="133"/>
    </location>
</feature>
<feature type="binding site" evidence="1">
    <location>
        <position position="55"/>
    </location>
    <ligand>
        <name>S-adenosyl-L-methionine</name>
        <dbReference type="ChEBI" id="CHEBI:59789"/>
    </ligand>
</feature>
<feature type="binding site" evidence="1">
    <location>
        <position position="89"/>
    </location>
    <ligand>
        <name>S-adenosyl-L-methionine</name>
        <dbReference type="ChEBI" id="CHEBI:59789"/>
    </ligand>
</feature>
<feature type="binding site" evidence="1">
    <location>
        <begin position="101"/>
        <end position="106"/>
    </location>
    <ligand>
        <name>S-adenosyl-L-methionine</name>
        <dbReference type="ChEBI" id="CHEBI:59789"/>
    </ligand>
</feature>
<dbReference type="EC" id="2.1.1.177" evidence="1"/>
<dbReference type="EMBL" id="CP000924">
    <property type="protein sequence ID" value="ABY93780.1"/>
    <property type="molecule type" value="Genomic_DNA"/>
</dbReference>
<dbReference type="RefSeq" id="WP_009052100.1">
    <property type="nucleotide sequence ID" value="NC_010321.1"/>
</dbReference>
<dbReference type="SMR" id="B0KB09"/>
<dbReference type="STRING" id="340099.Teth39_0107"/>
<dbReference type="KEGG" id="tpd:Teth39_0107"/>
<dbReference type="eggNOG" id="COG1576">
    <property type="taxonomic scope" value="Bacteria"/>
</dbReference>
<dbReference type="HOGENOM" id="CLU_100552_0_1_9"/>
<dbReference type="Proteomes" id="UP000002156">
    <property type="component" value="Chromosome"/>
</dbReference>
<dbReference type="GO" id="GO:0005737">
    <property type="term" value="C:cytoplasm"/>
    <property type="evidence" value="ECO:0007669"/>
    <property type="project" value="UniProtKB-SubCell"/>
</dbReference>
<dbReference type="GO" id="GO:0070038">
    <property type="term" value="F:rRNA (pseudouridine-N3-)-methyltransferase activity"/>
    <property type="evidence" value="ECO:0007669"/>
    <property type="project" value="UniProtKB-UniRule"/>
</dbReference>
<dbReference type="CDD" id="cd18081">
    <property type="entry name" value="RlmH-like"/>
    <property type="match status" value="1"/>
</dbReference>
<dbReference type="Gene3D" id="3.40.1280.10">
    <property type="match status" value="1"/>
</dbReference>
<dbReference type="HAMAP" id="MF_00658">
    <property type="entry name" value="23SrRNA_methyltr_H"/>
    <property type="match status" value="1"/>
</dbReference>
<dbReference type="InterPro" id="IPR029028">
    <property type="entry name" value="Alpha/beta_knot_MTases"/>
</dbReference>
<dbReference type="InterPro" id="IPR003742">
    <property type="entry name" value="RlmH-like"/>
</dbReference>
<dbReference type="InterPro" id="IPR029026">
    <property type="entry name" value="tRNA_m1G_MTases_N"/>
</dbReference>
<dbReference type="PANTHER" id="PTHR33603">
    <property type="entry name" value="METHYLTRANSFERASE"/>
    <property type="match status" value="1"/>
</dbReference>
<dbReference type="PANTHER" id="PTHR33603:SF1">
    <property type="entry name" value="RIBOSOMAL RNA LARGE SUBUNIT METHYLTRANSFERASE H"/>
    <property type="match status" value="1"/>
</dbReference>
<dbReference type="Pfam" id="PF02590">
    <property type="entry name" value="SPOUT_MTase"/>
    <property type="match status" value="1"/>
</dbReference>
<dbReference type="SUPFAM" id="SSF75217">
    <property type="entry name" value="alpha/beta knot"/>
    <property type="match status" value="1"/>
</dbReference>
<comment type="function">
    <text evidence="1">Specifically methylates the pseudouridine at position 1915 (m3Psi1915) in 23S rRNA.</text>
</comment>
<comment type="catalytic activity">
    <reaction evidence="1">
        <text>pseudouridine(1915) in 23S rRNA + S-adenosyl-L-methionine = N(3)-methylpseudouridine(1915) in 23S rRNA + S-adenosyl-L-homocysteine + H(+)</text>
        <dbReference type="Rhea" id="RHEA:42752"/>
        <dbReference type="Rhea" id="RHEA-COMP:10221"/>
        <dbReference type="Rhea" id="RHEA-COMP:10222"/>
        <dbReference type="ChEBI" id="CHEBI:15378"/>
        <dbReference type="ChEBI" id="CHEBI:57856"/>
        <dbReference type="ChEBI" id="CHEBI:59789"/>
        <dbReference type="ChEBI" id="CHEBI:65314"/>
        <dbReference type="ChEBI" id="CHEBI:74486"/>
        <dbReference type="EC" id="2.1.1.177"/>
    </reaction>
</comment>
<comment type="subunit">
    <text evidence="1">Homodimer.</text>
</comment>
<comment type="subcellular location">
    <subcellularLocation>
        <location evidence="1">Cytoplasm</location>
    </subcellularLocation>
</comment>
<comment type="similarity">
    <text evidence="1">Belongs to the RNA methyltransferase RlmH family.</text>
</comment>
<reference key="1">
    <citation type="submission" date="2008-01" db="EMBL/GenBank/DDBJ databases">
        <title>Complete sequence of Thermoanaerobacter pseudethanolicus 39E.</title>
        <authorList>
            <person name="Copeland A."/>
            <person name="Lucas S."/>
            <person name="Lapidus A."/>
            <person name="Barry K."/>
            <person name="Glavina del Rio T."/>
            <person name="Dalin E."/>
            <person name="Tice H."/>
            <person name="Pitluck S."/>
            <person name="Bruce D."/>
            <person name="Goodwin L."/>
            <person name="Saunders E."/>
            <person name="Brettin T."/>
            <person name="Detter J.C."/>
            <person name="Han C."/>
            <person name="Schmutz J."/>
            <person name="Larimer F."/>
            <person name="Land M."/>
            <person name="Hauser L."/>
            <person name="Kyrpides N."/>
            <person name="Lykidis A."/>
            <person name="Hemme C."/>
            <person name="Fields M.W."/>
            <person name="He Z."/>
            <person name="Zhou J."/>
            <person name="Richardson P."/>
        </authorList>
    </citation>
    <scope>NUCLEOTIDE SEQUENCE [LARGE SCALE GENOMIC DNA]</scope>
    <source>
        <strain>ATCC 33223 / DSM 2355 / 39E</strain>
    </source>
</reference>
<proteinExistence type="inferred from homology"/>
<keyword id="KW-0963">Cytoplasm</keyword>
<keyword id="KW-0489">Methyltransferase</keyword>
<keyword id="KW-1185">Reference proteome</keyword>
<keyword id="KW-0698">rRNA processing</keyword>
<keyword id="KW-0949">S-adenosyl-L-methionine</keyword>
<keyword id="KW-0808">Transferase</keyword>
<evidence type="ECO:0000255" key="1">
    <source>
        <dbReference type="HAMAP-Rule" id="MF_00658"/>
    </source>
</evidence>
<organism>
    <name type="scientific">Thermoanaerobacter pseudethanolicus (strain ATCC 33223 / 39E)</name>
    <name type="common">Clostridium thermohydrosulfuricum</name>
    <dbReference type="NCBI Taxonomy" id="340099"/>
    <lineage>
        <taxon>Bacteria</taxon>
        <taxon>Bacillati</taxon>
        <taxon>Bacillota</taxon>
        <taxon>Clostridia</taxon>
        <taxon>Thermoanaerobacterales</taxon>
        <taxon>Thermoanaerobacteraceae</taxon>
        <taxon>Thermoanaerobacter</taxon>
    </lineage>
</organism>
<accession>B0KB09</accession>
<name>RLMH2_THEP3</name>
<sequence>MNYKVYATGNKIEKFYSDAIKEYQKRLNRFCNISFTNYKNPQQLPKQQIDKYYKIGILPSGKSLSSEELAEKIKELELSAKTDILIVIGNEEIPLNESISISPMEMSLGLASTILFEQLYRAYKILNNEPYHK</sequence>
<gene>
    <name evidence="1" type="primary">rlmH2</name>
    <name type="ordered locus">Teth39_0107</name>
</gene>
<protein>
    <recommendedName>
        <fullName evidence="1">Ribosomal RNA large subunit methyltransferase H 2</fullName>
        <ecNumber evidence="1">2.1.1.177</ecNumber>
    </recommendedName>
    <alternativeName>
        <fullName evidence="1">23S rRNA (pseudouridine1915-N3)-methyltransferase 2</fullName>
    </alternativeName>
    <alternativeName>
        <fullName evidence="1">23S rRNA m3Psi1915 methyltransferase 2</fullName>
    </alternativeName>
    <alternativeName>
        <fullName evidence="1">rRNA (pseudouridine-N3-)-methyltransferase RlmH 2</fullName>
    </alternativeName>
</protein>